<dbReference type="EC" id="2.3.1.180" evidence="1"/>
<dbReference type="EMBL" id="CP000305">
    <property type="protein sequence ID" value="ABG18361.1"/>
    <property type="molecule type" value="Genomic_DNA"/>
</dbReference>
<dbReference type="EMBL" id="ACNQ01000011">
    <property type="protein sequence ID" value="EEO76662.1"/>
    <property type="molecule type" value="Genomic_DNA"/>
</dbReference>
<dbReference type="RefSeq" id="WP_002210933.1">
    <property type="nucleotide sequence ID" value="NZ_ACNQ01000011.1"/>
</dbReference>
<dbReference type="SMR" id="Q1CI19"/>
<dbReference type="KEGG" id="ypn:YPN_2032"/>
<dbReference type="HOGENOM" id="CLU_039592_3_1_6"/>
<dbReference type="UniPathway" id="UPA00094"/>
<dbReference type="Proteomes" id="UP000008936">
    <property type="component" value="Chromosome"/>
</dbReference>
<dbReference type="GO" id="GO:0005737">
    <property type="term" value="C:cytoplasm"/>
    <property type="evidence" value="ECO:0007669"/>
    <property type="project" value="UniProtKB-SubCell"/>
</dbReference>
<dbReference type="GO" id="GO:0004315">
    <property type="term" value="F:3-oxoacyl-[acyl-carrier-protein] synthase activity"/>
    <property type="evidence" value="ECO:0007669"/>
    <property type="project" value="InterPro"/>
</dbReference>
<dbReference type="GO" id="GO:0033818">
    <property type="term" value="F:beta-ketoacyl-acyl-carrier-protein synthase III activity"/>
    <property type="evidence" value="ECO:0007669"/>
    <property type="project" value="UniProtKB-UniRule"/>
</dbReference>
<dbReference type="GO" id="GO:0006633">
    <property type="term" value="P:fatty acid biosynthetic process"/>
    <property type="evidence" value="ECO:0007669"/>
    <property type="project" value="UniProtKB-UniRule"/>
</dbReference>
<dbReference type="CDD" id="cd00830">
    <property type="entry name" value="KAS_III"/>
    <property type="match status" value="1"/>
</dbReference>
<dbReference type="FunFam" id="3.40.47.10:FF:000004">
    <property type="entry name" value="3-oxoacyl-[acyl-carrier-protein] synthase 3"/>
    <property type="match status" value="1"/>
</dbReference>
<dbReference type="Gene3D" id="3.40.47.10">
    <property type="match status" value="1"/>
</dbReference>
<dbReference type="HAMAP" id="MF_01815">
    <property type="entry name" value="FabH"/>
    <property type="match status" value="1"/>
</dbReference>
<dbReference type="InterPro" id="IPR013747">
    <property type="entry name" value="ACP_syn_III_C"/>
</dbReference>
<dbReference type="InterPro" id="IPR013751">
    <property type="entry name" value="ACP_syn_III_N"/>
</dbReference>
<dbReference type="InterPro" id="IPR004655">
    <property type="entry name" value="FabH"/>
</dbReference>
<dbReference type="InterPro" id="IPR016039">
    <property type="entry name" value="Thiolase-like"/>
</dbReference>
<dbReference type="NCBIfam" id="TIGR00747">
    <property type="entry name" value="fabH"/>
    <property type="match status" value="1"/>
</dbReference>
<dbReference type="NCBIfam" id="NF006829">
    <property type="entry name" value="PRK09352.1"/>
    <property type="match status" value="1"/>
</dbReference>
<dbReference type="PANTHER" id="PTHR43091">
    <property type="entry name" value="3-OXOACYL-[ACYL-CARRIER-PROTEIN] SYNTHASE"/>
    <property type="match status" value="1"/>
</dbReference>
<dbReference type="PANTHER" id="PTHR43091:SF1">
    <property type="entry name" value="BETA-KETOACYL-[ACYL-CARRIER-PROTEIN] SYNTHASE III, CHLOROPLASTIC"/>
    <property type="match status" value="1"/>
</dbReference>
<dbReference type="Pfam" id="PF08545">
    <property type="entry name" value="ACP_syn_III"/>
    <property type="match status" value="1"/>
</dbReference>
<dbReference type="Pfam" id="PF08541">
    <property type="entry name" value="ACP_syn_III_C"/>
    <property type="match status" value="1"/>
</dbReference>
<dbReference type="SUPFAM" id="SSF53901">
    <property type="entry name" value="Thiolase-like"/>
    <property type="match status" value="1"/>
</dbReference>
<reference key="1">
    <citation type="journal article" date="2006" name="J. Bacteriol.">
        <title>Complete genome sequence of Yersinia pestis strains Antiqua and Nepal516: evidence of gene reduction in an emerging pathogen.</title>
        <authorList>
            <person name="Chain P.S.G."/>
            <person name="Hu P."/>
            <person name="Malfatti S.A."/>
            <person name="Radnedge L."/>
            <person name="Larimer F."/>
            <person name="Vergez L.M."/>
            <person name="Worsham P."/>
            <person name="Chu M.C."/>
            <person name="Andersen G.L."/>
        </authorList>
    </citation>
    <scope>NUCLEOTIDE SEQUENCE [LARGE SCALE GENOMIC DNA]</scope>
    <source>
        <strain>Nepal516</strain>
    </source>
</reference>
<reference key="2">
    <citation type="submission" date="2009-04" db="EMBL/GenBank/DDBJ databases">
        <title>Yersinia pestis Nepal516A whole genome shotgun sequencing project.</title>
        <authorList>
            <person name="Plunkett G. III"/>
            <person name="Anderson B.D."/>
            <person name="Baumler D.J."/>
            <person name="Burland V."/>
            <person name="Cabot E.L."/>
            <person name="Glasner J.D."/>
            <person name="Mau B."/>
            <person name="Neeno-Eckwall E."/>
            <person name="Perna N.T."/>
            <person name="Munk A.C."/>
            <person name="Tapia R."/>
            <person name="Green L.D."/>
            <person name="Rogers Y.C."/>
            <person name="Detter J.C."/>
            <person name="Bruce D.C."/>
            <person name="Brettin T.S."/>
        </authorList>
    </citation>
    <scope>NUCLEOTIDE SEQUENCE [LARGE SCALE GENOMIC DNA]</scope>
    <source>
        <strain>Nepal516</strain>
    </source>
</reference>
<name>FABH_YERPN</name>
<sequence>MYTKILGTGSYLPVQVRSNADLEKMVDTSDEWIVTRTGIRERRIAGLDETVATMGFQAAEKALEMAGIDKDDIGLIIVATTSSSHAFPSSACQVQRMLGIKDAASFDLAAACAGFTYALSVADQYVKSGAVKHAIVIGSDVLSRALDPEDRGTIILFGDGAGAVVLGASEQPGIMSTHLHADGRYGELLALPYPDRQQDQPAYVTMAGNEVFKVAVTELAHIVDETLQANNLDRTALDWLVPHQANLRIISATAKKLGMGMDKVVITLDRHGNTSAASVPSAFDEAVRDGRIQRGQLVLLEAFGGGFTWGSALVRF</sequence>
<gene>
    <name evidence="1" type="primary">fabH</name>
    <name type="ordered locus">YPN_2032</name>
    <name type="ORF">YP516_2264</name>
</gene>
<feature type="chain" id="PRO_1000056448" description="Beta-ketoacyl-[acyl-carrier-protein] synthase III">
    <location>
        <begin position="1"/>
        <end position="316"/>
    </location>
</feature>
<feature type="region of interest" description="ACP-binding" evidence="1">
    <location>
        <begin position="244"/>
        <end position="248"/>
    </location>
</feature>
<feature type="active site" evidence="1">
    <location>
        <position position="112"/>
    </location>
</feature>
<feature type="active site" evidence="1">
    <location>
        <position position="243"/>
    </location>
</feature>
<feature type="active site" evidence="1">
    <location>
        <position position="273"/>
    </location>
</feature>
<accession>Q1CI19</accession>
<accession>C4GTZ8</accession>
<organism>
    <name type="scientific">Yersinia pestis bv. Antiqua (strain Nepal516)</name>
    <dbReference type="NCBI Taxonomy" id="377628"/>
    <lineage>
        <taxon>Bacteria</taxon>
        <taxon>Pseudomonadati</taxon>
        <taxon>Pseudomonadota</taxon>
        <taxon>Gammaproteobacteria</taxon>
        <taxon>Enterobacterales</taxon>
        <taxon>Yersiniaceae</taxon>
        <taxon>Yersinia</taxon>
    </lineage>
</organism>
<evidence type="ECO:0000255" key="1">
    <source>
        <dbReference type="HAMAP-Rule" id="MF_01815"/>
    </source>
</evidence>
<keyword id="KW-0012">Acyltransferase</keyword>
<keyword id="KW-0963">Cytoplasm</keyword>
<keyword id="KW-0275">Fatty acid biosynthesis</keyword>
<keyword id="KW-0276">Fatty acid metabolism</keyword>
<keyword id="KW-0444">Lipid biosynthesis</keyword>
<keyword id="KW-0443">Lipid metabolism</keyword>
<keyword id="KW-0511">Multifunctional enzyme</keyword>
<keyword id="KW-0808">Transferase</keyword>
<comment type="function">
    <text evidence="1">Catalyzes the condensation reaction of fatty acid synthesis by the addition to an acyl acceptor of two carbons from malonyl-ACP. Catalyzes the first condensation reaction which initiates fatty acid synthesis and may therefore play a role in governing the total rate of fatty acid production. Possesses both acetoacetyl-ACP synthase and acetyl transacylase activities. Its substrate specificity determines the biosynthesis of branched-chain and/or straight-chain of fatty acids.</text>
</comment>
<comment type="catalytic activity">
    <reaction evidence="1">
        <text>malonyl-[ACP] + acetyl-CoA + H(+) = 3-oxobutanoyl-[ACP] + CO2 + CoA</text>
        <dbReference type="Rhea" id="RHEA:12080"/>
        <dbReference type="Rhea" id="RHEA-COMP:9623"/>
        <dbReference type="Rhea" id="RHEA-COMP:9625"/>
        <dbReference type="ChEBI" id="CHEBI:15378"/>
        <dbReference type="ChEBI" id="CHEBI:16526"/>
        <dbReference type="ChEBI" id="CHEBI:57287"/>
        <dbReference type="ChEBI" id="CHEBI:57288"/>
        <dbReference type="ChEBI" id="CHEBI:78449"/>
        <dbReference type="ChEBI" id="CHEBI:78450"/>
        <dbReference type="EC" id="2.3.1.180"/>
    </reaction>
</comment>
<comment type="pathway">
    <text evidence="1">Lipid metabolism; fatty acid biosynthesis.</text>
</comment>
<comment type="subunit">
    <text evidence="1">Homodimer.</text>
</comment>
<comment type="subcellular location">
    <subcellularLocation>
        <location evidence="1">Cytoplasm</location>
    </subcellularLocation>
</comment>
<comment type="domain">
    <text evidence="1">The last Arg residue of the ACP-binding site is essential for the weak association between ACP/AcpP and FabH.</text>
</comment>
<comment type="similarity">
    <text evidence="1">Belongs to the thiolase-like superfamily. FabH family.</text>
</comment>
<proteinExistence type="inferred from homology"/>
<protein>
    <recommendedName>
        <fullName evidence="1">Beta-ketoacyl-[acyl-carrier-protein] synthase III</fullName>
        <shortName evidence="1">Beta-ketoacyl-ACP synthase III</shortName>
        <shortName evidence="1">KAS III</shortName>
        <ecNumber evidence="1">2.3.1.180</ecNumber>
    </recommendedName>
    <alternativeName>
        <fullName evidence="1">3-oxoacyl-[acyl-carrier-protein] synthase 3</fullName>
    </alternativeName>
    <alternativeName>
        <fullName evidence="1">3-oxoacyl-[acyl-carrier-protein] synthase III</fullName>
    </alternativeName>
</protein>